<feature type="chain" id="PRO_1000166742" description="Large ribosomal subunit protein bL21">
    <location>
        <begin position="1"/>
        <end position="104"/>
    </location>
</feature>
<reference key="1">
    <citation type="journal article" date="2010" name="Genome Biol.">
        <title>Structure and dynamics of the pan-genome of Streptococcus pneumoniae and closely related species.</title>
        <authorList>
            <person name="Donati C."/>
            <person name="Hiller N.L."/>
            <person name="Tettelin H."/>
            <person name="Muzzi A."/>
            <person name="Croucher N.J."/>
            <person name="Angiuoli S.V."/>
            <person name="Oggioni M."/>
            <person name="Dunning Hotopp J.C."/>
            <person name="Hu F.Z."/>
            <person name="Riley D.R."/>
            <person name="Covacci A."/>
            <person name="Mitchell T.J."/>
            <person name="Bentley S.D."/>
            <person name="Kilian M."/>
            <person name="Ehrlich G.D."/>
            <person name="Rappuoli R."/>
            <person name="Moxon E.R."/>
            <person name="Masignani V."/>
        </authorList>
    </citation>
    <scope>NUCLEOTIDE SEQUENCE [LARGE SCALE GENOMIC DNA]</scope>
    <source>
        <strain>70585</strain>
    </source>
</reference>
<evidence type="ECO:0000255" key="1">
    <source>
        <dbReference type="HAMAP-Rule" id="MF_01363"/>
    </source>
</evidence>
<evidence type="ECO:0000305" key="2"/>
<sequence>MSTYAIIKTGGKQVKVEVGQAVYVEKLNVEAGQEVTFNEVVLVGGENTVVGTPLVAGATVVGTVEKQGKQKKVVTYKYKPKKGSHRKQGHRQPYTKVVINAINA</sequence>
<comment type="function">
    <text evidence="1">This protein binds to 23S rRNA in the presence of protein L20.</text>
</comment>
<comment type="subunit">
    <text evidence="1">Part of the 50S ribosomal subunit. Contacts protein L20.</text>
</comment>
<comment type="similarity">
    <text evidence="1">Belongs to the bacterial ribosomal protein bL21 family.</text>
</comment>
<dbReference type="EMBL" id="CP000918">
    <property type="protein sequence ID" value="ACO18009.1"/>
    <property type="molecule type" value="Genomic_DNA"/>
</dbReference>
<dbReference type="RefSeq" id="WP_000109141.1">
    <property type="nucleotide sequence ID" value="NC_012468.1"/>
</dbReference>
<dbReference type="SMR" id="C1C799"/>
<dbReference type="GeneID" id="93739805"/>
<dbReference type="KEGG" id="snm:SP70585_1176"/>
<dbReference type="HOGENOM" id="CLU_061463_3_1_9"/>
<dbReference type="Proteomes" id="UP000002211">
    <property type="component" value="Chromosome"/>
</dbReference>
<dbReference type="GO" id="GO:0005737">
    <property type="term" value="C:cytoplasm"/>
    <property type="evidence" value="ECO:0007669"/>
    <property type="project" value="UniProtKB-ARBA"/>
</dbReference>
<dbReference type="GO" id="GO:1990904">
    <property type="term" value="C:ribonucleoprotein complex"/>
    <property type="evidence" value="ECO:0007669"/>
    <property type="project" value="UniProtKB-KW"/>
</dbReference>
<dbReference type="GO" id="GO:0005840">
    <property type="term" value="C:ribosome"/>
    <property type="evidence" value="ECO:0007669"/>
    <property type="project" value="UniProtKB-KW"/>
</dbReference>
<dbReference type="GO" id="GO:0019843">
    <property type="term" value="F:rRNA binding"/>
    <property type="evidence" value="ECO:0007669"/>
    <property type="project" value="UniProtKB-UniRule"/>
</dbReference>
<dbReference type="GO" id="GO:0003735">
    <property type="term" value="F:structural constituent of ribosome"/>
    <property type="evidence" value="ECO:0007669"/>
    <property type="project" value="InterPro"/>
</dbReference>
<dbReference type="GO" id="GO:0006412">
    <property type="term" value="P:translation"/>
    <property type="evidence" value="ECO:0007669"/>
    <property type="project" value="UniProtKB-UniRule"/>
</dbReference>
<dbReference type="HAMAP" id="MF_01363">
    <property type="entry name" value="Ribosomal_bL21"/>
    <property type="match status" value="1"/>
</dbReference>
<dbReference type="InterPro" id="IPR028909">
    <property type="entry name" value="bL21-like"/>
</dbReference>
<dbReference type="InterPro" id="IPR036164">
    <property type="entry name" value="bL21-like_sf"/>
</dbReference>
<dbReference type="InterPro" id="IPR001787">
    <property type="entry name" value="Ribosomal_bL21"/>
</dbReference>
<dbReference type="InterPro" id="IPR018258">
    <property type="entry name" value="Ribosomal_bL21_CS"/>
</dbReference>
<dbReference type="NCBIfam" id="TIGR00061">
    <property type="entry name" value="L21"/>
    <property type="match status" value="1"/>
</dbReference>
<dbReference type="PANTHER" id="PTHR21349">
    <property type="entry name" value="50S RIBOSOMAL PROTEIN L21"/>
    <property type="match status" value="1"/>
</dbReference>
<dbReference type="PANTHER" id="PTHR21349:SF0">
    <property type="entry name" value="LARGE RIBOSOMAL SUBUNIT PROTEIN BL21M"/>
    <property type="match status" value="1"/>
</dbReference>
<dbReference type="Pfam" id="PF00829">
    <property type="entry name" value="Ribosomal_L21p"/>
    <property type="match status" value="1"/>
</dbReference>
<dbReference type="SUPFAM" id="SSF141091">
    <property type="entry name" value="L21p-like"/>
    <property type="match status" value="1"/>
</dbReference>
<dbReference type="PROSITE" id="PS01169">
    <property type="entry name" value="RIBOSOMAL_L21"/>
    <property type="match status" value="1"/>
</dbReference>
<keyword id="KW-0687">Ribonucleoprotein</keyword>
<keyword id="KW-0689">Ribosomal protein</keyword>
<keyword id="KW-0694">RNA-binding</keyword>
<keyword id="KW-0699">rRNA-binding</keyword>
<organism>
    <name type="scientific">Streptococcus pneumoniae (strain 70585)</name>
    <dbReference type="NCBI Taxonomy" id="488221"/>
    <lineage>
        <taxon>Bacteria</taxon>
        <taxon>Bacillati</taxon>
        <taxon>Bacillota</taxon>
        <taxon>Bacilli</taxon>
        <taxon>Lactobacillales</taxon>
        <taxon>Streptococcaceae</taxon>
        <taxon>Streptococcus</taxon>
    </lineage>
</organism>
<proteinExistence type="inferred from homology"/>
<gene>
    <name evidence="1" type="primary">rplU</name>
    <name type="ordered locus">SP70585_1176</name>
</gene>
<accession>C1C799</accession>
<name>RL21_STRP7</name>
<protein>
    <recommendedName>
        <fullName evidence="1">Large ribosomal subunit protein bL21</fullName>
    </recommendedName>
    <alternativeName>
        <fullName evidence="2">50S ribosomal protein L21</fullName>
    </alternativeName>
</protein>